<feature type="signal peptide" evidence="3">
    <location>
        <begin position="1"/>
        <end position="19"/>
    </location>
</feature>
<feature type="chain" id="PRO_0000388749" description="Alpha-latrotoxin-associated low molecular weight protein-2" evidence="6">
    <location>
        <begin position="20"/>
        <end position="88"/>
    </location>
</feature>
<feature type="modified residue" description="Pyrrolidone carboxylic acid" evidence="7">
    <location>
        <position position="20"/>
    </location>
</feature>
<feature type="disulfide bond" evidence="1">
    <location>
        <begin position="30"/>
        <end position="66"/>
    </location>
</feature>
<feature type="disulfide bond" evidence="1">
    <location>
        <begin position="46"/>
        <end position="62"/>
    </location>
</feature>
<feature type="disulfide bond" evidence="1">
    <location>
        <begin position="49"/>
        <end position="75"/>
    </location>
</feature>
<feature type="sequence conflict" description="In Ref. 2; AA sequence." evidence="6" ref="2">
    <original>C</original>
    <variation>P</variation>
    <location>
        <position position="66"/>
    </location>
</feature>
<feature type="sequence conflict" description="In Ref. 2; AA sequence." evidence="6" ref="2">
    <original>CVK</original>
    <variation>PVW</variation>
    <location>
        <begin position="75"/>
        <end position="77"/>
    </location>
</feature>
<feature type="sequence conflict" description="In Ref. 2; AA sequence." evidence="6" ref="2">
    <original>A</original>
    <variation>R</variation>
    <location>
        <position position="82"/>
    </location>
</feature>
<evidence type="ECO:0000250" key="1">
    <source>
        <dbReference type="UniProtKB" id="P55847"/>
    </source>
</evidence>
<evidence type="ECO:0000250" key="2">
    <source>
        <dbReference type="UniProtKB" id="V9QEI7"/>
    </source>
</evidence>
<evidence type="ECO:0000255" key="3"/>
<evidence type="ECO:0000269" key="4">
    <source>
    </source>
</evidence>
<evidence type="ECO:0000303" key="5">
    <source>
    </source>
</evidence>
<evidence type="ECO:0000305" key="6"/>
<evidence type="ECO:0000305" key="7">
    <source>
    </source>
</evidence>
<dbReference type="EMBL" id="DQ011856">
    <property type="protein sequence ID" value="AAY33774.1"/>
    <property type="molecule type" value="mRNA"/>
</dbReference>
<dbReference type="SMR" id="Q4U4N3"/>
<dbReference type="ArachnoServer" id="AS000720">
    <property type="toxin name" value="alpha-Latrotoxin-associated LMWP2"/>
</dbReference>
<dbReference type="GO" id="GO:0005576">
    <property type="term" value="C:extracellular region"/>
    <property type="evidence" value="ECO:0007669"/>
    <property type="project" value="UniProtKB-SubCell"/>
</dbReference>
<dbReference type="GO" id="GO:0005184">
    <property type="term" value="F:neuropeptide hormone activity"/>
    <property type="evidence" value="ECO:0007669"/>
    <property type="project" value="InterPro"/>
</dbReference>
<dbReference type="Gene3D" id="1.10.2010.10">
    <property type="entry name" value="Crustacean CHH/MIH/GIH neurohormone"/>
    <property type="match status" value="1"/>
</dbReference>
<dbReference type="InterPro" id="IPR018251">
    <property type="entry name" value="Crust_neurhormone_CS"/>
</dbReference>
<dbReference type="InterPro" id="IPR031098">
    <property type="entry name" value="Crust_neurohorm"/>
</dbReference>
<dbReference type="InterPro" id="IPR035957">
    <property type="entry name" value="Crust_neurohorm_sf"/>
</dbReference>
<dbReference type="Pfam" id="PF01147">
    <property type="entry name" value="Crust_neurohorm"/>
    <property type="match status" value="1"/>
</dbReference>
<dbReference type="SUPFAM" id="SSF81778">
    <property type="entry name" value="Crustacean CHH/MIH/GIH neurohormone"/>
    <property type="match status" value="1"/>
</dbReference>
<dbReference type="PROSITE" id="PS01250">
    <property type="entry name" value="CHH_MIH_GIH"/>
    <property type="match status" value="1"/>
</dbReference>
<reference key="1">
    <citation type="submission" date="2005-04" db="EMBL/GenBank/DDBJ databases">
        <title>Low molecular weight components from black widow spider venom.</title>
        <authorList>
            <person name="Lipkin A.V."/>
            <person name="Pluzhnikov K.A."/>
            <person name="Grishin E.V."/>
        </authorList>
    </citation>
    <scope>NUCLEOTIDE SEQUENCE [MRNA]</scope>
</reference>
<reference key="2">
    <citation type="journal article" date="1995" name="Toxicon">
        <title>Low molecular weight components from black widow spider venom.</title>
        <authorList>
            <person name="Volkova T.M."/>
            <person name="Pluzhnikov K.A."/>
            <person name="Woll P.G."/>
            <person name="Grishin E.V."/>
        </authorList>
    </citation>
    <scope>PROTEIN SEQUENCE OF 64-82</scope>
    <scope>PYROGLUTAMATE FORMATION AT GLN-20</scope>
    <scope>FUNCTION</scope>
    <scope>SUBCELLULAR LOCATION</scope>
    <scope>TISSUE SPECIFICITY</scope>
    <source>
        <tissue>Venom</tissue>
    </source>
</reference>
<name>TXA2_LATTR</name>
<keyword id="KW-0903">Direct protein sequencing</keyword>
<keyword id="KW-1015">Disulfide bond</keyword>
<keyword id="KW-0873">Pyrrolidone carboxylic acid</keyword>
<keyword id="KW-0964">Secreted</keyword>
<keyword id="KW-0732">Signal</keyword>
<accession>Q4U4N3</accession>
<accession>Q9TWG5</accession>
<protein>
    <recommendedName>
        <fullName evidence="5">Alpha-latrotoxin-associated low molecular weight protein-2</fullName>
        <shortName evidence="5">Alpha-latrotoxin-associated LMWP2</shortName>
    </recommendedName>
    <alternativeName>
        <fullName evidence="2">Latrodectin-2</fullName>
    </alternativeName>
</protein>
<comment type="function">
    <text evidence="4">May increase the toxicity of alpha-latrotoxin and/or other venom components. Is non-toxic to mice and to the cockroach Periplaneta americana.</text>
</comment>
<comment type="subcellular location">
    <subcellularLocation>
        <location evidence="4">Secreted</location>
    </subcellularLocation>
</comment>
<comment type="tissue specificity">
    <text evidence="4">Expressed by the venom gland.</text>
</comment>
<comment type="PTM">
    <text evidence="4">The N-terminus is blocked.</text>
</comment>
<comment type="miscellaneous">
    <text evidence="4">Co-purifies with latroinsectotoxin.</text>
</comment>
<comment type="similarity">
    <text evidence="6">Belongs to the arthropod CHH/MIH/GIH/VIH hormone family.</text>
</comment>
<organism>
    <name type="scientific">Latrodectus tredecimguttatus</name>
    <name type="common">Mediterranean black widow spider</name>
    <name type="synonym">Latrodectus mactans tredecimguttatus</name>
    <dbReference type="NCBI Taxonomy" id="6925"/>
    <lineage>
        <taxon>Eukaryota</taxon>
        <taxon>Metazoa</taxon>
        <taxon>Ecdysozoa</taxon>
        <taxon>Arthropoda</taxon>
        <taxon>Chelicerata</taxon>
        <taxon>Arachnida</taxon>
        <taxon>Araneae</taxon>
        <taxon>Araneomorphae</taxon>
        <taxon>Entelegynae</taxon>
        <taxon>Araneoidea</taxon>
        <taxon>Theridiidae</taxon>
        <taxon>Latrodectus</taxon>
    </lineage>
</organism>
<sequence length="88" mass="9838">MLKLICIAFLVTVLTLVAGQDSLDPAEFGCADDVNQAELLKNNDICLQCEDLHKEGVVFSLCKTNCFTTEYFQHCVKDLEEAKKEPPE</sequence>
<proteinExistence type="evidence at protein level"/>